<feature type="chain" id="PRO_0000263324" description="Peptide chain release factor 1">
    <location>
        <begin position="1"/>
        <end position="360"/>
    </location>
</feature>
<feature type="modified residue" description="N5-methylglutamine" evidence="1">
    <location>
        <position position="237"/>
    </location>
</feature>
<sequence length="360" mass="40025">MKASLLNKLDVLSDRFEELTALLGDAEVISDQTRFRAYSREYAEVEPVVALYAQLLRVQGDLEGAQALLKDSDPDMREMAVEEVRETKQQLVELEAQLQRMLLPKDPNDGRNVFLEIRAGTGGDEAAIFSGDLFRMYSRYAERRGWRVEILSENEGEHGGYKEVIARVEGDSVYGKLKFESGAHRVQRVPETESQGRIHTSACTVAVLPEPDEQQAIEINPADLRVDTYRSSGAGGQHVNKTDSAIRITHLPSGIVVECQEERSQHKNRARAMSWLSAKLNDQQTSAAANAIASERKLLVGSGDRSERIRTYNFPQGRVTDHRVNLTLYSLDEVLAGGVDAVIEPLLAEYQADQLAALGE</sequence>
<reference key="1">
    <citation type="journal article" date="2005" name="Proc. Natl. Acad. Sci. U.S.A.">
        <title>Comparison of the complete genome sequences of Pseudomonas syringae pv. syringae B728a and pv. tomato DC3000.</title>
        <authorList>
            <person name="Feil H."/>
            <person name="Feil W.S."/>
            <person name="Chain P."/>
            <person name="Larimer F."/>
            <person name="Dibartolo G."/>
            <person name="Copeland A."/>
            <person name="Lykidis A."/>
            <person name="Trong S."/>
            <person name="Nolan M."/>
            <person name="Goltsman E."/>
            <person name="Thiel J."/>
            <person name="Malfatti S."/>
            <person name="Loper J.E."/>
            <person name="Lapidus A."/>
            <person name="Detter J.C."/>
            <person name="Land M."/>
            <person name="Richardson P.M."/>
            <person name="Kyrpides N.C."/>
            <person name="Ivanova N."/>
            <person name="Lindow S.E."/>
        </authorList>
    </citation>
    <scope>NUCLEOTIDE SEQUENCE [LARGE SCALE GENOMIC DNA]</scope>
    <source>
        <strain>B728a</strain>
    </source>
</reference>
<dbReference type="EMBL" id="CP000075">
    <property type="protein sequence ID" value="AAY36005.1"/>
    <property type="molecule type" value="Genomic_DNA"/>
</dbReference>
<dbReference type="RefSeq" id="WP_003404940.1">
    <property type="nucleotide sequence ID" value="NC_007005.1"/>
</dbReference>
<dbReference type="RefSeq" id="YP_234043.1">
    <property type="nucleotide sequence ID" value="NC_007005.1"/>
</dbReference>
<dbReference type="SMR" id="Q4ZXW7"/>
<dbReference type="STRING" id="205918.Psyr_0949"/>
<dbReference type="GeneID" id="69857988"/>
<dbReference type="KEGG" id="psb:Psyr_0949"/>
<dbReference type="PATRIC" id="fig|205918.7.peg.978"/>
<dbReference type="eggNOG" id="COG0216">
    <property type="taxonomic scope" value="Bacteria"/>
</dbReference>
<dbReference type="HOGENOM" id="CLU_036856_0_1_6"/>
<dbReference type="OrthoDB" id="9806673at2"/>
<dbReference type="Proteomes" id="UP000000426">
    <property type="component" value="Chromosome"/>
</dbReference>
<dbReference type="GO" id="GO:0005737">
    <property type="term" value="C:cytoplasm"/>
    <property type="evidence" value="ECO:0007669"/>
    <property type="project" value="UniProtKB-SubCell"/>
</dbReference>
<dbReference type="GO" id="GO:0016149">
    <property type="term" value="F:translation release factor activity, codon specific"/>
    <property type="evidence" value="ECO:0007669"/>
    <property type="project" value="UniProtKB-UniRule"/>
</dbReference>
<dbReference type="FunFam" id="3.30.160.20:FF:000004">
    <property type="entry name" value="Peptide chain release factor 1"/>
    <property type="match status" value="1"/>
</dbReference>
<dbReference type="FunFam" id="3.30.70.1660:FF:000002">
    <property type="entry name" value="Peptide chain release factor 1"/>
    <property type="match status" value="1"/>
</dbReference>
<dbReference type="FunFam" id="3.30.70.1660:FF:000004">
    <property type="entry name" value="Peptide chain release factor 1"/>
    <property type="match status" value="1"/>
</dbReference>
<dbReference type="Gene3D" id="3.30.160.20">
    <property type="match status" value="1"/>
</dbReference>
<dbReference type="Gene3D" id="3.30.70.1660">
    <property type="match status" value="1"/>
</dbReference>
<dbReference type="Gene3D" id="6.10.140.1950">
    <property type="match status" value="1"/>
</dbReference>
<dbReference type="HAMAP" id="MF_00093">
    <property type="entry name" value="Rel_fac_1"/>
    <property type="match status" value="1"/>
</dbReference>
<dbReference type="InterPro" id="IPR005139">
    <property type="entry name" value="PCRF"/>
</dbReference>
<dbReference type="InterPro" id="IPR000352">
    <property type="entry name" value="Pep_chain_release_fac_I"/>
</dbReference>
<dbReference type="InterPro" id="IPR045853">
    <property type="entry name" value="Pep_chain_release_fac_I_sf"/>
</dbReference>
<dbReference type="InterPro" id="IPR050057">
    <property type="entry name" value="Prokaryotic/Mito_RF"/>
</dbReference>
<dbReference type="InterPro" id="IPR004373">
    <property type="entry name" value="RF-1"/>
</dbReference>
<dbReference type="NCBIfam" id="TIGR00019">
    <property type="entry name" value="prfA"/>
    <property type="match status" value="1"/>
</dbReference>
<dbReference type="NCBIfam" id="NF001859">
    <property type="entry name" value="PRK00591.1"/>
    <property type="match status" value="1"/>
</dbReference>
<dbReference type="PANTHER" id="PTHR43804">
    <property type="entry name" value="LD18447P"/>
    <property type="match status" value="1"/>
</dbReference>
<dbReference type="PANTHER" id="PTHR43804:SF7">
    <property type="entry name" value="LD18447P"/>
    <property type="match status" value="1"/>
</dbReference>
<dbReference type="Pfam" id="PF03462">
    <property type="entry name" value="PCRF"/>
    <property type="match status" value="1"/>
</dbReference>
<dbReference type="Pfam" id="PF00472">
    <property type="entry name" value="RF-1"/>
    <property type="match status" value="1"/>
</dbReference>
<dbReference type="SMART" id="SM00937">
    <property type="entry name" value="PCRF"/>
    <property type="match status" value="1"/>
</dbReference>
<dbReference type="SUPFAM" id="SSF75620">
    <property type="entry name" value="Release factor"/>
    <property type="match status" value="1"/>
</dbReference>
<dbReference type="PROSITE" id="PS00745">
    <property type="entry name" value="RF_PROK_I"/>
    <property type="match status" value="1"/>
</dbReference>
<organism>
    <name type="scientific">Pseudomonas syringae pv. syringae (strain B728a)</name>
    <dbReference type="NCBI Taxonomy" id="205918"/>
    <lineage>
        <taxon>Bacteria</taxon>
        <taxon>Pseudomonadati</taxon>
        <taxon>Pseudomonadota</taxon>
        <taxon>Gammaproteobacteria</taxon>
        <taxon>Pseudomonadales</taxon>
        <taxon>Pseudomonadaceae</taxon>
        <taxon>Pseudomonas</taxon>
        <taxon>Pseudomonas syringae</taxon>
    </lineage>
</organism>
<accession>Q4ZXW7</accession>
<protein>
    <recommendedName>
        <fullName evidence="1">Peptide chain release factor 1</fullName>
        <shortName evidence="1">RF-1</shortName>
    </recommendedName>
</protein>
<keyword id="KW-0963">Cytoplasm</keyword>
<keyword id="KW-0488">Methylation</keyword>
<keyword id="KW-0648">Protein biosynthesis</keyword>
<evidence type="ECO:0000255" key="1">
    <source>
        <dbReference type="HAMAP-Rule" id="MF_00093"/>
    </source>
</evidence>
<name>RF1_PSEU2</name>
<proteinExistence type="inferred from homology"/>
<gene>
    <name evidence="1" type="primary">prfA</name>
    <name type="ordered locus">Psyr_0949</name>
</gene>
<comment type="function">
    <text evidence="1">Peptide chain release factor 1 directs the termination of translation in response to the peptide chain termination codons UAG and UAA.</text>
</comment>
<comment type="subcellular location">
    <subcellularLocation>
        <location evidence="1">Cytoplasm</location>
    </subcellularLocation>
</comment>
<comment type="PTM">
    <text evidence="1">Methylated by PrmC. Methylation increases the termination efficiency of RF1.</text>
</comment>
<comment type="similarity">
    <text evidence="1">Belongs to the prokaryotic/mitochondrial release factor family.</text>
</comment>